<reference key="1">
    <citation type="journal article" date="1991" name="Cell">
        <title>Gamma-tubulin is a highly conserved component of the centrosome.</title>
        <authorList>
            <person name="Stearns T."/>
            <person name="Evans L."/>
            <person name="Kirschner M."/>
        </authorList>
    </citation>
    <scope>NUCLEOTIDE SEQUENCE [GENOMIC DNA]</scope>
</reference>
<reference key="2">
    <citation type="journal article" date="1991" name="J. Cell Sci.">
        <title>The fission yeast gamma-tubulin is essential for mitosis and is localized at microtubule organizing centers.</title>
        <authorList>
            <person name="Horio T."/>
            <person name="Uzawa S."/>
            <person name="Jung M.K."/>
            <person name="Oakley B.R."/>
            <person name="Tanaka K."/>
            <person name="Yanagida M."/>
        </authorList>
    </citation>
    <scope>NUCLEOTIDE SEQUENCE [GENOMIC DNA]</scope>
    <source>
        <strain>972 / ATCC 24843</strain>
    </source>
</reference>
<reference key="3">
    <citation type="journal article" date="2002" name="Nature">
        <title>The genome sequence of Schizosaccharomyces pombe.</title>
        <authorList>
            <person name="Wood V."/>
            <person name="Gwilliam R."/>
            <person name="Rajandream M.A."/>
            <person name="Lyne M.H."/>
            <person name="Lyne R."/>
            <person name="Stewart A."/>
            <person name="Sgouros J.G."/>
            <person name="Peat N."/>
            <person name="Hayles J."/>
            <person name="Baker S.G."/>
            <person name="Basham D."/>
            <person name="Bowman S."/>
            <person name="Brooks K."/>
            <person name="Brown D."/>
            <person name="Brown S."/>
            <person name="Chillingworth T."/>
            <person name="Churcher C.M."/>
            <person name="Collins M."/>
            <person name="Connor R."/>
            <person name="Cronin A."/>
            <person name="Davis P."/>
            <person name="Feltwell T."/>
            <person name="Fraser A."/>
            <person name="Gentles S."/>
            <person name="Goble A."/>
            <person name="Hamlin N."/>
            <person name="Harris D.E."/>
            <person name="Hidalgo J."/>
            <person name="Hodgson G."/>
            <person name="Holroyd S."/>
            <person name="Hornsby T."/>
            <person name="Howarth S."/>
            <person name="Huckle E.J."/>
            <person name="Hunt S."/>
            <person name="Jagels K."/>
            <person name="James K.D."/>
            <person name="Jones L."/>
            <person name="Jones M."/>
            <person name="Leather S."/>
            <person name="McDonald S."/>
            <person name="McLean J."/>
            <person name="Mooney P."/>
            <person name="Moule S."/>
            <person name="Mungall K.L."/>
            <person name="Murphy L.D."/>
            <person name="Niblett D."/>
            <person name="Odell C."/>
            <person name="Oliver K."/>
            <person name="O'Neil S."/>
            <person name="Pearson D."/>
            <person name="Quail M.A."/>
            <person name="Rabbinowitsch E."/>
            <person name="Rutherford K.M."/>
            <person name="Rutter S."/>
            <person name="Saunders D."/>
            <person name="Seeger K."/>
            <person name="Sharp S."/>
            <person name="Skelton J."/>
            <person name="Simmonds M.N."/>
            <person name="Squares R."/>
            <person name="Squares S."/>
            <person name="Stevens K."/>
            <person name="Taylor K."/>
            <person name="Taylor R.G."/>
            <person name="Tivey A."/>
            <person name="Walsh S.V."/>
            <person name="Warren T."/>
            <person name="Whitehead S."/>
            <person name="Woodward J.R."/>
            <person name="Volckaert G."/>
            <person name="Aert R."/>
            <person name="Robben J."/>
            <person name="Grymonprez B."/>
            <person name="Weltjens I."/>
            <person name="Vanstreels E."/>
            <person name="Rieger M."/>
            <person name="Schaefer M."/>
            <person name="Mueller-Auer S."/>
            <person name="Gabel C."/>
            <person name="Fuchs M."/>
            <person name="Duesterhoeft A."/>
            <person name="Fritzc C."/>
            <person name="Holzer E."/>
            <person name="Moestl D."/>
            <person name="Hilbert H."/>
            <person name="Borzym K."/>
            <person name="Langer I."/>
            <person name="Beck A."/>
            <person name="Lehrach H."/>
            <person name="Reinhardt R."/>
            <person name="Pohl T.M."/>
            <person name="Eger P."/>
            <person name="Zimmermann W."/>
            <person name="Wedler H."/>
            <person name="Wambutt R."/>
            <person name="Purnelle B."/>
            <person name="Goffeau A."/>
            <person name="Cadieu E."/>
            <person name="Dreano S."/>
            <person name="Gloux S."/>
            <person name="Lelaure V."/>
            <person name="Mottier S."/>
            <person name="Galibert F."/>
            <person name="Aves S.J."/>
            <person name="Xiang Z."/>
            <person name="Hunt C."/>
            <person name="Moore K."/>
            <person name="Hurst S.M."/>
            <person name="Lucas M."/>
            <person name="Rochet M."/>
            <person name="Gaillardin C."/>
            <person name="Tallada V.A."/>
            <person name="Garzon A."/>
            <person name="Thode G."/>
            <person name="Daga R.R."/>
            <person name="Cruzado L."/>
            <person name="Jimenez J."/>
            <person name="Sanchez M."/>
            <person name="del Rey F."/>
            <person name="Benito J."/>
            <person name="Dominguez A."/>
            <person name="Revuelta J.L."/>
            <person name="Moreno S."/>
            <person name="Armstrong J."/>
            <person name="Forsburg S.L."/>
            <person name="Cerutti L."/>
            <person name="Lowe T."/>
            <person name="McCombie W.R."/>
            <person name="Paulsen I."/>
            <person name="Potashkin J."/>
            <person name="Shpakovski G.V."/>
            <person name="Ussery D."/>
            <person name="Barrell B.G."/>
            <person name="Nurse P."/>
        </authorList>
    </citation>
    <scope>NUCLEOTIDE SEQUENCE [LARGE SCALE GENOMIC DNA]</scope>
    <source>
        <strain>972 / ATCC 24843</strain>
    </source>
</reference>
<reference key="4">
    <citation type="journal article" date="2008" name="J. Cell Sci.">
        <title>Two distinct regions of Mto1 are required for normal microtubule nucleation and efficient association with the gamma-tubulin complex in vivo.</title>
        <authorList>
            <person name="Samejima I."/>
            <person name="Miller V.J."/>
            <person name="Groocock L.M."/>
            <person name="Sawin K.E."/>
        </authorList>
    </citation>
    <scope>INTERACTION WITH MTO1 AND MTO2</scope>
</reference>
<dbReference type="EMBL" id="M63447">
    <property type="protein sequence ID" value="AAA35305.1"/>
    <property type="molecule type" value="Genomic_DNA"/>
</dbReference>
<dbReference type="EMBL" id="X62031">
    <property type="protein sequence ID" value="CAA43976.1"/>
    <property type="molecule type" value="Genomic_DNA"/>
</dbReference>
<dbReference type="EMBL" id="CU329671">
    <property type="protein sequence ID" value="CAA19365.1"/>
    <property type="molecule type" value="Genomic_DNA"/>
</dbReference>
<dbReference type="PIR" id="B39528">
    <property type="entry name" value="UBZPG"/>
</dbReference>
<dbReference type="RefSeq" id="NP_596147.1">
    <property type="nucleotide sequence ID" value="NM_001022066.2"/>
</dbReference>
<dbReference type="SMR" id="P25295"/>
<dbReference type="BioGRID" id="276756">
    <property type="interactions" value="37"/>
</dbReference>
<dbReference type="FunCoup" id="P25295">
    <property type="interactions" value="339"/>
</dbReference>
<dbReference type="IntAct" id="P25295">
    <property type="interactions" value="4"/>
</dbReference>
<dbReference type="MINT" id="P25295"/>
<dbReference type="STRING" id="284812.P25295"/>
<dbReference type="iPTMnet" id="P25295"/>
<dbReference type="PaxDb" id="4896-SPBC32F12.04.1"/>
<dbReference type="EnsemblFungi" id="SPBC32F12.04.1">
    <property type="protein sequence ID" value="SPBC32F12.04.1:pep"/>
    <property type="gene ID" value="SPBC32F12.04"/>
</dbReference>
<dbReference type="GeneID" id="2540223"/>
<dbReference type="KEGG" id="spo:2540223"/>
<dbReference type="PomBase" id="SPBC32F12.04"/>
<dbReference type="VEuPathDB" id="FungiDB:SPBC32F12.04"/>
<dbReference type="eggNOG" id="KOG1374">
    <property type="taxonomic scope" value="Eukaryota"/>
</dbReference>
<dbReference type="HOGENOM" id="CLU_015718_1_0_1"/>
<dbReference type="InParanoid" id="P25295"/>
<dbReference type="OMA" id="HRYISIL"/>
<dbReference type="PhylomeDB" id="P25295"/>
<dbReference type="PRO" id="PR:P25295"/>
<dbReference type="Proteomes" id="UP000002485">
    <property type="component" value="Chromosome II"/>
</dbReference>
<dbReference type="GO" id="GO:0005737">
    <property type="term" value="C:cytoplasm"/>
    <property type="evidence" value="ECO:0000314"/>
    <property type="project" value="PomBase"/>
</dbReference>
<dbReference type="GO" id="GO:0000923">
    <property type="term" value="C:equatorial microtubule organizing center"/>
    <property type="evidence" value="ECO:0000314"/>
    <property type="project" value="PomBase"/>
</dbReference>
<dbReference type="GO" id="GO:0000931">
    <property type="term" value="C:gamma-tubulin ring complex"/>
    <property type="evidence" value="ECO:0000314"/>
    <property type="project" value="PomBase"/>
</dbReference>
<dbReference type="GO" id="GO:0008275">
    <property type="term" value="C:gamma-tubulin small complex"/>
    <property type="evidence" value="ECO:0000314"/>
    <property type="project" value="PomBase"/>
</dbReference>
<dbReference type="GO" id="GO:0061496">
    <property type="term" value="C:half bridge of mitotic spindle pole body"/>
    <property type="evidence" value="ECO:0000314"/>
    <property type="project" value="PomBase"/>
</dbReference>
<dbReference type="GO" id="GO:0061497">
    <property type="term" value="C:inner plaque of mitotic spindle pole body"/>
    <property type="evidence" value="ECO:0000314"/>
    <property type="project" value="PomBase"/>
</dbReference>
<dbReference type="GO" id="GO:0031021">
    <property type="term" value="C:interphase microtubule organizing center"/>
    <property type="evidence" value="ECO:0000314"/>
    <property type="project" value="PomBase"/>
</dbReference>
<dbReference type="GO" id="GO:0043332">
    <property type="term" value="C:mating projection tip"/>
    <property type="evidence" value="ECO:0000314"/>
    <property type="project" value="PomBase"/>
</dbReference>
<dbReference type="GO" id="GO:0005874">
    <property type="term" value="C:microtubule"/>
    <property type="evidence" value="ECO:0007669"/>
    <property type="project" value="UniProtKB-KW"/>
</dbReference>
<dbReference type="GO" id="GO:0044732">
    <property type="term" value="C:mitotic spindle pole body"/>
    <property type="evidence" value="ECO:0000314"/>
    <property type="project" value="PomBase"/>
</dbReference>
<dbReference type="GO" id="GO:0005634">
    <property type="term" value="C:nucleus"/>
    <property type="evidence" value="ECO:0000314"/>
    <property type="project" value="PomBase"/>
</dbReference>
<dbReference type="GO" id="GO:0071957">
    <property type="term" value="C:old mitotic spindle pole body"/>
    <property type="evidence" value="ECO:0000314"/>
    <property type="project" value="PomBase"/>
</dbReference>
<dbReference type="GO" id="GO:0061499">
    <property type="term" value="C:outer plaque of mitotic spindle pole body"/>
    <property type="evidence" value="ECO:0000314"/>
    <property type="project" value="PomBase"/>
</dbReference>
<dbReference type="GO" id="GO:0005819">
    <property type="term" value="C:spindle"/>
    <property type="evidence" value="ECO:0000318"/>
    <property type="project" value="GO_Central"/>
</dbReference>
<dbReference type="GO" id="GO:0005816">
    <property type="term" value="C:spindle pole body"/>
    <property type="evidence" value="ECO:0000318"/>
    <property type="project" value="GO_Central"/>
</dbReference>
<dbReference type="GO" id="GO:0005525">
    <property type="term" value="F:GTP binding"/>
    <property type="evidence" value="ECO:0000318"/>
    <property type="project" value="GO_Central"/>
</dbReference>
<dbReference type="GO" id="GO:0140490">
    <property type="term" value="F:microtubule nucleator activity"/>
    <property type="evidence" value="ECO:0000269"/>
    <property type="project" value="PomBase"/>
</dbReference>
<dbReference type="GO" id="GO:0031122">
    <property type="term" value="P:cytoplasmic microtubule organization"/>
    <property type="evidence" value="ECO:0000305"/>
    <property type="project" value="PomBase"/>
</dbReference>
<dbReference type="GO" id="GO:0000212">
    <property type="term" value="P:meiotic spindle organization"/>
    <property type="evidence" value="ECO:0000318"/>
    <property type="project" value="GO_Central"/>
</dbReference>
<dbReference type="GO" id="GO:0007020">
    <property type="term" value="P:microtubule nucleation"/>
    <property type="evidence" value="ECO:0000315"/>
    <property type="project" value="PomBase"/>
</dbReference>
<dbReference type="GO" id="GO:0000278">
    <property type="term" value="P:mitotic cell cycle"/>
    <property type="evidence" value="ECO:0000318"/>
    <property type="project" value="GO_Central"/>
</dbReference>
<dbReference type="GO" id="GO:1902408">
    <property type="term" value="P:mitotic cytokinesis, division site positioning"/>
    <property type="evidence" value="ECO:0000315"/>
    <property type="project" value="PomBase"/>
</dbReference>
<dbReference type="GO" id="GO:0000070">
    <property type="term" value="P:mitotic sister chromatid segregation"/>
    <property type="evidence" value="ECO:0000318"/>
    <property type="project" value="GO_Central"/>
</dbReference>
<dbReference type="GO" id="GO:0051256">
    <property type="term" value="P:mitotic spindle midzone assembly"/>
    <property type="evidence" value="ECO:0000316"/>
    <property type="project" value="PomBase"/>
</dbReference>
<dbReference type="GO" id="GO:0007052">
    <property type="term" value="P:mitotic spindle organization"/>
    <property type="evidence" value="ECO:0000315"/>
    <property type="project" value="PomBase"/>
</dbReference>
<dbReference type="CDD" id="cd02188">
    <property type="entry name" value="gamma_tubulin"/>
    <property type="match status" value="1"/>
</dbReference>
<dbReference type="FunFam" id="1.10.287.600:FF:000004">
    <property type="entry name" value="Tubulin gamma chain"/>
    <property type="match status" value="1"/>
</dbReference>
<dbReference type="FunFam" id="3.30.1330.20:FF:000003">
    <property type="entry name" value="Tubulin gamma chain"/>
    <property type="match status" value="1"/>
</dbReference>
<dbReference type="FunFam" id="3.40.50.1440:FF:000012">
    <property type="entry name" value="Tubulin gamma chain"/>
    <property type="match status" value="1"/>
</dbReference>
<dbReference type="Gene3D" id="1.10.287.600">
    <property type="entry name" value="Helix hairpin bin"/>
    <property type="match status" value="1"/>
</dbReference>
<dbReference type="Gene3D" id="3.30.1330.20">
    <property type="entry name" value="Tubulin/FtsZ, C-terminal domain"/>
    <property type="match status" value="1"/>
</dbReference>
<dbReference type="Gene3D" id="3.40.50.1440">
    <property type="entry name" value="Tubulin/FtsZ, GTPase domain"/>
    <property type="match status" value="1"/>
</dbReference>
<dbReference type="InterPro" id="IPR002454">
    <property type="entry name" value="Gamma_tubulin"/>
</dbReference>
<dbReference type="InterPro" id="IPR008280">
    <property type="entry name" value="Tub_FtsZ_C"/>
</dbReference>
<dbReference type="InterPro" id="IPR000217">
    <property type="entry name" value="Tubulin"/>
</dbReference>
<dbReference type="InterPro" id="IPR037103">
    <property type="entry name" value="Tubulin/FtsZ-like_C"/>
</dbReference>
<dbReference type="InterPro" id="IPR018316">
    <property type="entry name" value="Tubulin/FtsZ_2-layer-sand-dom"/>
</dbReference>
<dbReference type="InterPro" id="IPR036525">
    <property type="entry name" value="Tubulin/FtsZ_GTPase_sf"/>
</dbReference>
<dbReference type="InterPro" id="IPR023123">
    <property type="entry name" value="Tubulin_C"/>
</dbReference>
<dbReference type="InterPro" id="IPR017975">
    <property type="entry name" value="Tubulin_CS"/>
</dbReference>
<dbReference type="InterPro" id="IPR003008">
    <property type="entry name" value="Tubulin_FtsZ_GTPase"/>
</dbReference>
<dbReference type="PANTHER" id="PTHR11588">
    <property type="entry name" value="TUBULIN"/>
    <property type="match status" value="1"/>
</dbReference>
<dbReference type="Pfam" id="PF00091">
    <property type="entry name" value="Tubulin"/>
    <property type="match status" value="1"/>
</dbReference>
<dbReference type="Pfam" id="PF03953">
    <property type="entry name" value="Tubulin_C"/>
    <property type="match status" value="1"/>
</dbReference>
<dbReference type="PRINTS" id="PR01164">
    <property type="entry name" value="GAMMATUBULIN"/>
</dbReference>
<dbReference type="PRINTS" id="PR01161">
    <property type="entry name" value="TUBULIN"/>
</dbReference>
<dbReference type="SMART" id="SM00864">
    <property type="entry name" value="Tubulin"/>
    <property type="match status" value="1"/>
</dbReference>
<dbReference type="SMART" id="SM00865">
    <property type="entry name" value="Tubulin_C"/>
    <property type="match status" value="1"/>
</dbReference>
<dbReference type="SUPFAM" id="SSF55307">
    <property type="entry name" value="Tubulin C-terminal domain-like"/>
    <property type="match status" value="1"/>
</dbReference>
<dbReference type="SUPFAM" id="SSF52490">
    <property type="entry name" value="Tubulin nucleotide-binding domain-like"/>
    <property type="match status" value="1"/>
</dbReference>
<dbReference type="PROSITE" id="PS00227">
    <property type="entry name" value="TUBULIN"/>
    <property type="match status" value="1"/>
</dbReference>
<organism>
    <name type="scientific">Schizosaccharomyces pombe (strain 972 / ATCC 24843)</name>
    <name type="common">Fission yeast</name>
    <dbReference type="NCBI Taxonomy" id="284812"/>
    <lineage>
        <taxon>Eukaryota</taxon>
        <taxon>Fungi</taxon>
        <taxon>Dikarya</taxon>
        <taxon>Ascomycota</taxon>
        <taxon>Taphrinomycotina</taxon>
        <taxon>Schizosaccharomycetes</taxon>
        <taxon>Schizosaccharomycetales</taxon>
        <taxon>Schizosaccharomycetaceae</taxon>
        <taxon>Schizosaccharomyces</taxon>
    </lineage>
</organism>
<keyword id="KW-0963">Cytoplasm</keyword>
<keyword id="KW-0206">Cytoskeleton</keyword>
<keyword id="KW-0342">GTP-binding</keyword>
<keyword id="KW-0493">Microtubule</keyword>
<keyword id="KW-0547">Nucleotide-binding</keyword>
<keyword id="KW-1185">Reference proteome</keyword>
<sequence length="446" mass="49966">MGREIITLQAGQCGNQIGSQFWQQLCLEHGIGPDGTLESFATEGVDRKDVFFYQSDDTRYIPRAILIDLEPRVVNNILSDTYGSLYNPENILITKNGGGAGNNWANGYSHAERIFEDIMDMIDREADGSDSLEGFSLLHSIAGGTGSGLGSFLLERLNDRYPKKIIQTYSVFPNSQSVSDVVVQPYNSLLALKRLTLNADSVVVLDNAALAHIAADRLHTQNPTFHQQNQLVSTVMSASTTTLRYPGYMNNDLVSIIASLIPSPRCHFLLTSYTPFTNQQVEEAKAIRKTTVLDVMRRLLLPKNQMVSVNPSKKSCFISILDIIQGEADPADVHKSLLRIRERRYASFIPWGPASIQVALSKKSPYIKTNHRVSGLMLANHTSIASLFKRTLDQYDRLRKRNAFLEQYKKEAIFEDDLNEFDSSRDVVADLINEYEACEDPNYLSL</sequence>
<feature type="chain" id="PRO_0000048480" description="Tubulin gamma chain">
    <location>
        <begin position="1"/>
        <end position="446"/>
    </location>
</feature>
<feature type="binding site" evidence="1">
    <location>
        <begin position="142"/>
        <end position="148"/>
    </location>
    <ligand>
        <name>GTP</name>
        <dbReference type="ChEBI" id="CHEBI:37565"/>
    </ligand>
</feature>
<evidence type="ECO:0000255" key="1"/>
<evidence type="ECO:0000269" key="2">
    <source>
    </source>
</evidence>
<evidence type="ECO:0000305" key="3"/>
<evidence type="ECO:0000312" key="4">
    <source>
        <dbReference type="PomBase" id="SPBC32F12.04"/>
    </source>
</evidence>
<comment type="function">
    <text>Tubulin is the major constituent of microtubules. The gamma chain is found at microtubule organizing centers (MTOC) such as the spindle poles or the centrosome, suggesting that it is involved in the minus-end nucleation of microtubule assembly.</text>
</comment>
<comment type="subunit">
    <text evidence="2">Interacts with mto1 (PubMed:19001497). Interacts with mto2 (PubMed:19001497).</text>
</comment>
<comment type="subcellular location">
    <subcellularLocation>
        <location evidence="3">Cytoplasm</location>
        <location evidence="3">Cytoskeleton</location>
        <location evidence="3">Microtubule organizing center</location>
        <location evidence="3">Spindle pole body</location>
    </subcellularLocation>
</comment>
<comment type="similarity">
    <text evidence="3">Belongs to the tubulin family.</text>
</comment>
<accession>P25295</accession>
<protein>
    <recommendedName>
        <fullName>Tubulin gamma chain</fullName>
    </recommendedName>
    <alternativeName>
        <fullName>Gamma-tubulin</fullName>
    </alternativeName>
</protein>
<gene>
    <name evidence="4" type="primary">gtb1</name>
    <name evidence="4" type="synonym">tug1</name>
    <name evidence="4" type="ORF">SPBC32F12.04</name>
</gene>
<proteinExistence type="evidence at protein level"/>
<name>TBG_SCHPO</name>